<gene>
    <name type="primary">MT-CYB</name>
    <name type="synonym">COB</name>
    <name type="synonym">CYTB</name>
    <name type="synonym">MTCYB</name>
</gene>
<organism>
    <name type="scientific">Nilgiritragus hylocrius</name>
    <name type="common">Nilgiri tahr</name>
    <name type="synonym">Hemitragus hylocrius</name>
    <dbReference type="NCBI Taxonomy" id="3349691"/>
    <lineage>
        <taxon>Eukaryota</taxon>
        <taxon>Metazoa</taxon>
        <taxon>Chordata</taxon>
        <taxon>Craniata</taxon>
        <taxon>Vertebrata</taxon>
        <taxon>Euteleostomi</taxon>
        <taxon>Mammalia</taxon>
        <taxon>Eutheria</taxon>
        <taxon>Laurasiatheria</taxon>
        <taxon>Artiodactyla</taxon>
        <taxon>Ruminantia</taxon>
        <taxon>Pecora</taxon>
        <taxon>Bovidae</taxon>
        <taxon>Caprinae</taxon>
        <taxon>Nilgiritragus</taxon>
    </lineage>
</organism>
<dbReference type="EMBL" id="AY846792">
    <property type="protein sequence ID" value="AAY54242.1"/>
    <property type="molecule type" value="Genomic_DNA"/>
</dbReference>
<dbReference type="GO" id="GO:0005743">
    <property type="term" value="C:mitochondrial inner membrane"/>
    <property type="evidence" value="ECO:0007669"/>
    <property type="project" value="UniProtKB-SubCell"/>
</dbReference>
<dbReference type="GO" id="GO:0045275">
    <property type="term" value="C:respiratory chain complex III"/>
    <property type="evidence" value="ECO:0007669"/>
    <property type="project" value="InterPro"/>
</dbReference>
<dbReference type="GO" id="GO:0046872">
    <property type="term" value="F:metal ion binding"/>
    <property type="evidence" value="ECO:0007669"/>
    <property type="project" value="UniProtKB-KW"/>
</dbReference>
<dbReference type="GO" id="GO:0008121">
    <property type="term" value="F:ubiquinol-cytochrome-c reductase activity"/>
    <property type="evidence" value="ECO:0007669"/>
    <property type="project" value="InterPro"/>
</dbReference>
<dbReference type="GO" id="GO:0006122">
    <property type="term" value="P:mitochondrial electron transport, ubiquinol to cytochrome c"/>
    <property type="evidence" value="ECO:0007669"/>
    <property type="project" value="TreeGrafter"/>
</dbReference>
<dbReference type="CDD" id="cd00290">
    <property type="entry name" value="cytochrome_b_C"/>
    <property type="match status" value="1"/>
</dbReference>
<dbReference type="CDD" id="cd00284">
    <property type="entry name" value="Cytochrome_b_N"/>
    <property type="match status" value="1"/>
</dbReference>
<dbReference type="FunFam" id="1.20.810.10:FF:000002">
    <property type="entry name" value="Cytochrome b"/>
    <property type="match status" value="1"/>
</dbReference>
<dbReference type="Gene3D" id="1.20.810.10">
    <property type="entry name" value="Cytochrome Bc1 Complex, Chain C"/>
    <property type="match status" value="1"/>
</dbReference>
<dbReference type="InterPro" id="IPR005798">
    <property type="entry name" value="Cyt_b/b6_C"/>
</dbReference>
<dbReference type="InterPro" id="IPR036150">
    <property type="entry name" value="Cyt_b/b6_C_sf"/>
</dbReference>
<dbReference type="InterPro" id="IPR005797">
    <property type="entry name" value="Cyt_b/b6_N"/>
</dbReference>
<dbReference type="InterPro" id="IPR027387">
    <property type="entry name" value="Cytb/b6-like_sf"/>
</dbReference>
<dbReference type="InterPro" id="IPR030689">
    <property type="entry name" value="Cytochrome_b"/>
</dbReference>
<dbReference type="InterPro" id="IPR048260">
    <property type="entry name" value="Cytochrome_b_C_euk/bac"/>
</dbReference>
<dbReference type="InterPro" id="IPR048259">
    <property type="entry name" value="Cytochrome_b_N_euk/bac"/>
</dbReference>
<dbReference type="InterPro" id="IPR016174">
    <property type="entry name" value="Di-haem_cyt_TM"/>
</dbReference>
<dbReference type="PANTHER" id="PTHR19271">
    <property type="entry name" value="CYTOCHROME B"/>
    <property type="match status" value="1"/>
</dbReference>
<dbReference type="PANTHER" id="PTHR19271:SF16">
    <property type="entry name" value="CYTOCHROME B"/>
    <property type="match status" value="1"/>
</dbReference>
<dbReference type="Pfam" id="PF00032">
    <property type="entry name" value="Cytochrom_B_C"/>
    <property type="match status" value="1"/>
</dbReference>
<dbReference type="Pfam" id="PF00033">
    <property type="entry name" value="Cytochrome_B"/>
    <property type="match status" value="1"/>
</dbReference>
<dbReference type="PIRSF" id="PIRSF038885">
    <property type="entry name" value="COB"/>
    <property type="match status" value="1"/>
</dbReference>
<dbReference type="SUPFAM" id="SSF81648">
    <property type="entry name" value="a domain/subunit of cytochrome bc1 complex (Ubiquinol-cytochrome c reductase)"/>
    <property type="match status" value="1"/>
</dbReference>
<dbReference type="SUPFAM" id="SSF81342">
    <property type="entry name" value="Transmembrane di-heme cytochromes"/>
    <property type="match status" value="1"/>
</dbReference>
<dbReference type="PROSITE" id="PS51003">
    <property type="entry name" value="CYTB_CTER"/>
    <property type="match status" value="1"/>
</dbReference>
<dbReference type="PROSITE" id="PS51002">
    <property type="entry name" value="CYTB_NTER"/>
    <property type="match status" value="1"/>
</dbReference>
<proteinExistence type="inferred from homology"/>
<keyword id="KW-0249">Electron transport</keyword>
<keyword id="KW-0349">Heme</keyword>
<keyword id="KW-0408">Iron</keyword>
<keyword id="KW-0472">Membrane</keyword>
<keyword id="KW-0479">Metal-binding</keyword>
<keyword id="KW-0496">Mitochondrion</keyword>
<keyword id="KW-0999">Mitochondrion inner membrane</keyword>
<keyword id="KW-0679">Respiratory chain</keyword>
<keyword id="KW-0812">Transmembrane</keyword>
<keyword id="KW-1133">Transmembrane helix</keyword>
<keyword id="KW-0813">Transport</keyword>
<keyword id="KW-0830">Ubiquinone</keyword>
<protein>
    <recommendedName>
        <fullName>Cytochrome b</fullName>
    </recommendedName>
    <alternativeName>
        <fullName>Complex III subunit 3</fullName>
    </alternativeName>
    <alternativeName>
        <fullName>Complex III subunit III</fullName>
    </alternativeName>
    <alternativeName>
        <fullName>Cytochrome b-c1 complex subunit 3</fullName>
    </alternativeName>
    <alternativeName>
        <fullName>Ubiquinol-cytochrome-c reductase complex cytochrome b subunit</fullName>
    </alternativeName>
</protein>
<feature type="chain" id="PRO_0000061028" description="Cytochrome b">
    <location>
        <begin position="1"/>
        <end position="379"/>
    </location>
</feature>
<feature type="transmembrane region" description="Helical" evidence="2">
    <location>
        <begin position="33"/>
        <end position="53"/>
    </location>
</feature>
<feature type="transmembrane region" description="Helical" evidence="2">
    <location>
        <begin position="77"/>
        <end position="98"/>
    </location>
</feature>
<feature type="transmembrane region" description="Helical" evidence="2">
    <location>
        <begin position="113"/>
        <end position="133"/>
    </location>
</feature>
<feature type="transmembrane region" description="Helical" evidence="2">
    <location>
        <begin position="178"/>
        <end position="198"/>
    </location>
</feature>
<feature type="transmembrane region" description="Helical" evidence="2">
    <location>
        <begin position="226"/>
        <end position="246"/>
    </location>
</feature>
<feature type="transmembrane region" description="Helical" evidence="2">
    <location>
        <begin position="288"/>
        <end position="308"/>
    </location>
</feature>
<feature type="transmembrane region" description="Helical" evidence="2">
    <location>
        <begin position="320"/>
        <end position="340"/>
    </location>
</feature>
<feature type="transmembrane region" description="Helical" evidence="2">
    <location>
        <begin position="347"/>
        <end position="367"/>
    </location>
</feature>
<feature type="binding site" description="axial binding residue" evidence="2">
    <location>
        <position position="83"/>
    </location>
    <ligand>
        <name>heme b</name>
        <dbReference type="ChEBI" id="CHEBI:60344"/>
        <label>b562</label>
    </ligand>
    <ligandPart>
        <name>Fe</name>
        <dbReference type="ChEBI" id="CHEBI:18248"/>
    </ligandPart>
</feature>
<feature type="binding site" description="axial binding residue" evidence="2">
    <location>
        <position position="97"/>
    </location>
    <ligand>
        <name>heme b</name>
        <dbReference type="ChEBI" id="CHEBI:60344"/>
        <label>b566</label>
    </ligand>
    <ligandPart>
        <name>Fe</name>
        <dbReference type="ChEBI" id="CHEBI:18248"/>
    </ligandPart>
</feature>
<feature type="binding site" description="axial binding residue" evidence="2">
    <location>
        <position position="182"/>
    </location>
    <ligand>
        <name>heme b</name>
        <dbReference type="ChEBI" id="CHEBI:60344"/>
        <label>b562</label>
    </ligand>
    <ligandPart>
        <name>Fe</name>
        <dbReference type="ChEBI" id="CHEBI:18248"/>
    </ligandPart>
</feature>
<feature type="binding site" description="axial binding residue" evidence="2">
    <location>
        <position position="196"/>
    </location>
    <ligand>
        <name>heme b</name>
        <dbReference type="ChEBI" id="CHEBI:60344"/>
        <label>b566</label>
    </ligand>
    <ligandPart>
        <name>Fe</name>
        <dbReference type="ChEBI" id="CHEBI:18248"/>
    </ligandPart>
</feature>
<feature type="binding site" evidence="2">
    <location>
        <position position="201"/>
    </location>
    <ligand>
        <name>a ubiquinone</name>
        <dbReference type="ChEBI" id="CHEBI:16389"/>
    </ligand>
</feature>
<evidence type="ECO:0000250" key="1"/>
<evidence type="ECO:0000250" key="2">
    <source>
        <dbReference type="UniProtKB" id="P00157"/>
    </source>
</evidence>
<evidence type="ECO:0000255" key="3">
    <source>
        <dbReference type="PROSITE-ProRule" id="PRU00967"/>
    </source>
</evidence>
<evidence type="ECO:0000255" key="4">
    <source>
        <dbReference type="PROSITE-ProRule" id="PRU00968"/>
    </source>
</evidence>
<geneLocation type="mitochondrion"/>
<sequence>MINIRKTHPLMKIVNNAFIDLPAPSNISSWWNFGSLLGICLVLQILTGLFLAMHYTPDTMTAFSSVTHICRDVNYGWIIRYMHANGASMFFICLFMHVGRGLYYGSYAFLETWNIGVILLFATMATAFMGYVLPWGQMSFWGATVITNLLSAIPYIGTNLVEWIWGGFSVDKATLTRFFAFHFIXPFIIAALAMVHLLFLHETGSNNPTGIPSDXDKIPFHPYYTIKDXLGAXLLILXLMLLVLFTPDLLGDPDNYTPANPLNTPPHIKPEWYFLFAYAILRSIPNKLGGVLALILSILILVLMPLLHTSKQRSMMFRPISQCMFWILVADLLTLTWIGGQPVEHPYIIIGQLASIMYFLIILXMMPVASIIENNLLKW</sequence>
<accession>Q4VKI6</accession>
<reference key="1">
    <citation type="journal article" date="2005" name="Mol. Phylogenet. Evol.">
        <title>Molecular evidence for the polyphyly of the genus Hemitragus (Mammalia, Bovidae).</title>
        <authorList>
            <person name="Ropiquet A."/>
            <person name="Hassanin A."/>
        </authorList>
    </citation>
    <scope>NUCLEOTIDE SEQUENCE [GENOMIC DNA]</scope>
</reference>
<name>CYB_NILHY</name>
<comment type="function">
    <text evidence="2">Component of the ubiquinol-cytochrome c reductase complex (complex III or cytochrome b-c1 complex) that is part of the mitochondrial respiratory chain. The b-c1 complex mediates electron transfer from ubiquinol to cytochrome c. Contributes to the generation of a proton gradient across the mitochondrial membrane that is then used for ATP synthesis.</text>
</comment>
<comment type="cofactor">
    <cofactor evidence="2">
        <name>heme b</name>
        <dbReference type="ChEBI" id="CHEBI:60344"/>
    </cofactor>
    <text evidence="2">Binds 2 heme b groups non-covalently.</text>
</comment>
<comment type="subunit">
    <text evidence="2">The cytochrome bc1 complex contains 11 subunits: 3 respiratory subunits (MT-CYB, CYC1 and UQCRFS1), 2 core proteins (UQCRC1 and UQCRC2) and 6 low-molecular weight proteins (UQCRH/QCR6, UQCRB/QCR7, UQCRQ/QCR8, UQCR10/QCR9, UQCR11/QCR10 and a cleavage product of UQCRFS1). This cytochrome bc1 complex then forms a dimer.</text>
</comment>
<comment type="subcellular location">
    <subcellularLocation>
        <location evidence="2">Mitochondrion inner membrane</location>
        <topology evidence="2">Multi-pass membrane protein</topology>
    </subcellularLocation>
</comment>
<comment type="miscellaneous">
    <text evidence="1">Heme 1 (or BL or b562) is low-potential and absorbs at about 562 nm, and heme 2 (or BH or b566) is high-potential and absorbs at about 566 nm.</text>
</comment>
<comment type="similarity">
    <text evidence="3 4">Belongs to the cytochrome b family.</text>
</comment>
<comment type="caution">
    <text evidence="2">The full-length protein contains only eight transmembrane helices, not nine as predicted by bioinformatics tools.</text>
</comment>